<name>FTHS_VIBPA</name>
<feature type="chain" id="PRO_0000199409" description="Formate--tetrahydrofolate ligase">
    <location>
        <begin position="1"/>
        <end position="582"/>
    </location>
</feature>
<feature type="binding site" evidence="1">
    <location>
        <begin position="65"/>
        <end position="72"/>
    </location>
    <ligand>
        <name>ATP</name>
        <dbReference type="ChEBI" id="CHEBI:30616"/>
    </ligand>
</feature>
<organism>
    <name type="scientific">Vibrio parahaemolyticus serotype O3:K6 (strain RIMD 2210633)</name>
    <dbReference type="NCBI Taxonomy" id="223926"/>
    <lineage>
        <taxon>Bacteria</taxon>
        <taxon>Pseudomonadati</taxon>
        <taxon>Pseudomonadota</taxon>
        <taxon>Gammaproteobacteria</taxon>
        <taxon>Vibrionales</taxon>
        <taxon>Vibrionaceae</taxon>
        <taxon>Vibrio</taxon>
    </lineage>
</organism>
<keyword id="KW-0067">ATP-binding</keyword>
<keyword id="KW-0436">Ligase</keyword>
<keyword id="KW-0547">Nucleotide-binding</keyword>
<keyword id="KW-0554">One-carbon metabolism</keyword>
<dbReference type="EC" id="6.3.4.3" evidence="1"/>
<dbReference type="EMBL" id="BA000032">
    <property type="protein sequence ID" value="BAC62177.1"/>
    <property type="molecule type" value="Genomic_DNA"/>
</dbReference>
<dbReference type="RefSeq" id="NP_800344.1">
    <property type="nucleotide sequence ID" value="NC_004605.1"/>
</dbReference>
<dbReference type="RefSeq" id="WP_005479111.1">
    <property type="nucleotide sequence ID" value="NC_004605.1"/>
</dbReference>
<dbReference type="SMR" id="Q87HX2"/>
<dbReference type="GeneID" id="1191523"/>
<dbReference type="KEGG" id="vpa:VPA0834"/>
<dbReference type="PATRIC" id="fig|223926.6.peg.3764"/>
<dbReference type="eggNOG" id="COG2759">
    <property type="taxonomic scope" value="Bacteria"/>
</dbReference>
<dbReference type="HOGENOM" id="CLU_003601_3_3_6"/>
<dbReference type="UniPathway" id="UPA00193"/>
<dbReference type="Proteomes" id="UP000002493">
    <property type="component" value="Chromosome 2"/>
</dbReference>
<dbReference type="GO" id="GO:0005524">
    <property type="term" value="F:ATP binding"/>
    <property type="evidence" value="ECO:0007669"/>
    <property type="project" value="UniProtKB-UniRule"/>
</dbReference>
<dbReference type="GO" id="GO:0004329">
    <property type="term" value="F:formate-tetrahydrofolate ligase activity"/>
    <property type="evidence" value="ECO:0007669"/>
    <property type="project" value="UniProtKB-UniRule"/>
</dbReference>
<dbReference type="GO" id="GO:0035999">
    <property type="term" value="P:tetrahydrofolate interconversion"/>
    <property type="evidence" value="ECO:0007669"/>
    <property type="project" value="UniProtKB-UniRule"/>
</dbReference>
<dbReference type="CDD" id="cd00477">
    <property type="entry name" value="FTHFS"/>
    <property type="match status" value="1"/>
</dbReference>
<dbReference type="FunFam" id="3.30.1510.10:FF:000001">
    <property type="entry name" value="Formate--tetrahydrofolate ligase"/>
    <property type="match status" value="1"/>
</dbReference>
<dbReference type="Gene3D" id="3.30.1510.10">
    <property type="entry name" value="Domain 2, N(10)-formyltetrahydrofolate synthetase"/>
    <property type="match status" value="1"/>
</dbReference>
<dbReference type="Gene3D" id="3.10.410.10">
    <property type="entry name" value="Formyltetrahydrofolate synthetase, domain 3"/>
    <property type="match status" value="1"/>
</dbReference>
<dbReference type="Gene3D" id="3.40.50.300">
    <property type="entry name" value="P-loop containing nucleotide triphosphate hydrolases"/>
    <property type="match status" value="1"/>
</dbReference>
<dbReference type="HAMAP" id="MF_01543">
    <property type="entry name" value="FTHFS"/>
    <property type="match status" value="1"/>
</dbReference>
<dbReference type="InterPro" id="IPR000559">
    <property type="entry name" value="Formate_THF_ligase"/>
</dbReference>
<dbReference type="InterPro" id="IPR020628">
    <property type="entry name" value="Formate_THF_ligase_CS"/>
</dbReference>
<dbReference type="InterPro" id="IPR027417">
    <property type="entry name" value="P-loop_NTPase"/>
</dbReference>
<dbReference type="NCBIfam" id="NF010030">
    <property type="entry name" value="PRK13505.1"/>
    <property type="match status" value="1"/>
</dbReference>
<dbReference type="NCBIfam" id="NF010031">
    <property type="entry name" value="PRK13506.1"/>
    <property type="match status" value="1"/>
</dbReference>
<dbReference type="Pfam" id="PF01268">
    <property type="entry name" value="FTHFS"/>
    <property type="match status" value="1"/>
</dbReference>
<dbReference type="SUPFAM" id="SSF52540">
    <property type="entry name" value="P-loop containing nucleoside triphosphate hydrolases"/>
    <property type="match status" value="1"/>
</dbReference>
<dbReference type="PROSITE" id="PS00721">
    <property type="entry name" value="FTHFS_1"/>
    <property type="match status" value="1"/>
</dbReference>
<dbReference type="PROSITE" id="PS00722">
    <property type="entry name" value="FTHFS_2"/>
    <property type="match status" value="1"/>
</dbReference>
<accession>Q87HX2</accession>
<proteinExistence type="inferred from homology"/>
<evidence type="ECO:0000255" key="1">
    <source>
        <dbReference type="HAMAP-Rule" id="MF_01543"/>
    </source>
</evidence>
<sequence>MQSDIEICRNTPLSSIDVIAEKAGLLPEEFDTHGKYKAKVHPKCLARLNDNQNGKLVLVTAITPTPLGEGKTVTTIGLAQGLAKLKQSVMACIRQPSMGPVFGIKGGAAGGGYSQVAPMEELNLHLTGDIHAVTAAHNLASAALDARLFHEQREGYDAFEARTGLKALKIDVESITWKRVMDHNDRALRMVKIGLNEHGKTINGFERNEGFDISAASELMAIIALAKNLKDLRQRIGKIVVAYDLDGQPITTEDLQVAGAMAVTLKEAIAPTLMQTLEGVPTLIHAGPFANIAHGNSSIIADEIALKLSRYTVTEAGFGSDMGFEKACNIKAAAANKAPDCVVIVATLRGLKANSGHYDLRPGMAIPDSIFSPDQAALVAGFENLKWHIKNVHKYGIPAVVAINQFPQDCEQELTALQDLIHAFDPNVKVAISTAFAQGGEGTRDLAQYVVDACEKTTNFRPLYQKHQSLQEKLMSVCEAGYGATNVEMSELATKQLAHFEKLGFNELAVCIAKTPLSVTTDSSVKGAPVGFTVPIRELRLCAGAGFVYALSGSVMTMPGLPDKPAFMNLDLDEDGNIIGLS</sequence>
<reference key="1">
    <citation type="journal article" date="2003" name="Lancet">
        <title>Genome sequence of Vibrio parahaemolyticus: a pathogenic mechanism distinct from that of V. cholerae.</title>
        <authorList>
            <person name="Makino K."/>
            <person name="Oshima K."/>
            <person name="Kurokawa K."/>
            <person name="Yokoyama K."/>
            <person name="Uda T."/>
            <person name="Tagomori K."/>
            <person name="Iijima Y."/>
            <person name="Najima M."/>
            <person name="Nakano M."/>
            <person name="Yamashita A."/>
            <person name="Kubota Y."/>
            <person name="Kimura S."/>
            <person name="Yasunaga T."/>
            <person name="Honda T."/>
            <person name="Shinagawa H."/>
            <person name="Hattori M."/>
            <person name="Iida T."/>
        </authorList>
    </citation>
    <scope>NUCLEOTIDE SEQUENCE [LARGE SCALE GENOMIC DNA]</scope>
    <source>
        <strain>RIMD 2210633</strain>
    </source>
</reference>
<comment type="catalytic activity">
    <reaction evidence="1">
        <text>(6S)-5,6,7,8-tetrahydrofolate + formate + ATP = (6R)-10-formyltetrahydrofolate + ADP + phosphate</text>
        <dbReference type="Rhea" id="RHEA:20221"/>
        <dbReference type="ChEBI" id="CHEBI:15740"/>
        <dbReference type="ChEBI" id="CHEBI:30616"/>
        <dbReference type="ChEBI" id="CHEBI:43474"/>
        <dbReference type="ChEBI" id="CHEBI:57453"/>
        <dbReference type="ChEBI" id="CHEBI:195366"/>
        <dbReference type="ChEBI" id="CHEBI:456216"/>
        <dbReference type="EC" id="6.3.4.3"/>
    </reaction>
</comment>
<comment type="pathway">
    <text evidence="1">One-carbon metabolism; tetrahydrofolate interconversion.</text>
</comment>
<comment type="similarity">
    <text evidence="1">Belongs to the formate--tetrahydrofolate ligase family.</text>
</comment>
<gene>
    <name evidence="1" type="primary">fhs</name>
    <name type="ordered locus">VPA0834</name>
</gene>
<protein>
    <recommendedName>
        <fullName evidence="1">Formate--tetrahydrofolate ligase</fullName>
        <ecNumber evidence="1">6.3.4.3</ecNumber>
    </recommendedName>
    <alternativeName>
        <fullName evidence="1">Formyltetrahydrofolate synthetase</fullName>
        <shortName evidence="1">FHS</shortName>
        <shortName evidence="1">FTHFS</shortName>
    </alternativeName>
</protein>